<dbReference type="EMBL" id="AB008105">
    <property type="protein sequence ID" value="BAA32420.1"/>
    <property type="molecule type" value="mRNA"/>
</dbReference>
<dbReference type="EMBL" id="AC012561">
    <property type="protein sequence ID" value="AAF87871.1"/>
    <property type="molecule type" value="Genomic_DNA"/>
</dbReference>
<dbReference type="EMBL" id="AC079279">
    <property type="protein sequence ID" value="AAG51201.1"/>
    <property type="molecule type" value="Genomic_DNA"/>
</dbReference>
<dbReference type="EMBL" id="CP002684">
    <property type="protein sequence ID" value="AEE32574.1"/>
    <property type="molecule type" value="Genomic_DNA"/>
</dbReference>
<dbReference type="EMBL" id="BT025295">
    <property type="protein sequence ID" value="ABF19048.1"/>
    <property type="molecule type" value="mRNA"/>
</dbReference>
<dbReference type="EMBL" id="AK228091">
    <property type="protein sequence ID" value="BAF00050.1"/>
    <property type="molecule type" value="mRNA"/>
</dbReference>
<dbReference type="PIR" id="T52011">
    <property type="entry name" value="T52011"/>
</dbReference>
<dbReference type="RefSeq" id="NP_175479.1">
    <molecule id="O80339-1"/>
    <property type="nucleotide sequence ID" value="NM_103946.3"/>
</dbReference>
<dbReference type="SMR" id="O80339"/>
<dbReference type="BioGRID" id="26711">
    <property type="interactions" value="9"/>
</dbReference>
<dbReference type="FunCoup" id="O80339">
    <property type="interactions" value="1435"/>
</dbReference>
<dbReference type="IntAct" id="O80339">
    <property type="interactions" value="6"/>
</dbReference>
<dbReference type="STRING" id="3702.O80339"/>
<dbReference type="GlyGen" id="O80339">
    <property type="glycosylation" value="1 site"/>
</dbReference>
<dbReference type="PaxDb" id="3702-AT1G50640.1"/>
<dbReference type="EnsemblPlants" id="AT1G50640.1">
    <molecule id="O80339-1"/>
    <property type="protein sequence ID" value="AT1G50640.1"/>
    <property type="gene ID" value="AT1G50640"/>
</dbReference>
<dbReference type="GeneID" id="841486"/>
<dbReference type="Gramene" id="AT1G50640.1">
    <molecule id="O80339-1"/>
    <property type="protein sequence ID" value="AT1G50640.1"/>
    <property type="gene ID" value="AT1G50640"/>
</dbReference>
<dbReference type="KEGG" id="ath:AT1G50640"/>
<dbReference type="Araport" id="AT1G50640"/>
<dbReference type="TAIR" id="AT1G50640">
    <property type="gene designation" value="ERF3"/>
</dbReference>
<dbReference type="eggNOG" id="ENOG502RYHI">
    <property type="taxonomic scope" value="Eukaryota"/>
</dbReference>
<dbReference type="HOGENOM" id="CLU_042594_5_0_1"/>
<dbReference type="InParanoid" id="O80339"/>
<dbReference type="OMA" id="NQVDPFM"/>
<dbReference type="PhylomeDB" id="O80339"/>
<dbReference type="PRO" id="PR:O80339"/>
<dbReference type="Proteomes" id="UP000006548">
    <property type="component" value="Chromosome 1"/>
</dbReference>
<dbReference type="ExpressionAtlas" id="O80339">
    <property type="expression patterns" value="baseline and differential"/>
</dbReference>
<dbReference type="GO" id="GO:0005634">
    <property type="term" value="C:nucleus"/>
    <property type="evidence" value="ECO:0007669"/>
    <property type="project" value="UniProtKB-SubCell"/>
</dbReference>
<dbReference type="GO" id="GO:0003700">
    <property type="term" value="F:DNA-binding transcription factor activity"/>
    <property type="evidence" value="ECO:0000250"/>
    <property type="project" value="TAIR"/>
</dbReference>
<dbReference type="GO" id="GO:0000976">
    <property type="term" value="F:transcription cis-regulatory region binding"/>
    <property type="evidence" value="ECO:0000353"/>
    <property type="project" value="TAIR"/>
</dbReference>
<dbReference type="GO" id="GO:0006952">
    <property type="term" value="P:defense response"/>
    <property type="evidence" value="ECO:0007669"/>
    <property type="project" value="UniProtKB-KW"/>
</dbReference>
<dbReference type="GO" id="GO:0009873">
    <property type="term" value="P:ethylene-activated signaling pathway"/>
    <property type="evidence" value="ECO:0007669"/>
    <property type="project" value="UniProtKB-KW"/>
</dbReference>
<dbReference type="GO" id="GO:0010105">
    <property type="term" value="P:negative regulation of ethylene-activated signaling pathway"/>
    <property type="evidence" value="ECO:0000304"/>
    <property type="project" value="TAIR"/>
</dbReference>
<dbReference type="CDD" id="cd00018">
    <property type="entry name" value="AP2"/>
    <property type="match status" value="1"/>
</dbReference>
<dbReference type="FunFam" id="3.30.730.10:FF:000001">
    <property type="entry name" value="Ethylene-responsive transcription factor 2"/>
    <property type="match status" value="1"/>
</dbReference>
<dbReference type="Gene3D" id="3.30.730.10">
    <property type="entry name" value="AP2/ERF domain"/>
    <property type="match status" value="1"/>
</dbReference>
<dbReference type="InterPro" id="IPR001471">
    <property type="entry name" value="AP2/ERF_dom"/>
</dbReference>
<dbReference type="InterPro" id="IPR036955">
    <property type="entry name" value="AP2/ERF_dom_sf"/>
</dbReference>
<dbReference type="InterPro" id="IPR016177">
    <property type="entry name" value="DNA-bd_dom_sf"/>
</dbReference>
<dbReference type="PANTHER" id="PTHR31677">
    <property type="entry name" value="AP2 DOMAIN CLASS TRANSCRIPTION FACTOR"/>
    <property type="match status" value="1"/>
</dbReference>
<dbReference type="PANTHER" id="PTHR31677:SF234">
    <property type="entry name" value="ETHYLENE-RESPONSIVE TRANSCRIPTION FACTOR 3"/>
    <property type="match status" value="1"/>
</dbReference>
<dbReference type="Pfam" id="PF00847">
    <property type="entry name" value="AP2"/>
    <property type="match status" value="1"/>
</dbReference>
<dbReference type="PRINTS" id="PR00367">
    <property type="entry name" value="ETHRSPELEMNT"/>
</dbReference>
<dbReference type="SMART" id="SM00380">
    <property type="entry name" value="AP2"/>
    <property type="match status" value="1"/>
</dbReference>
<dbReference type="SUPFAM" id="SSF54171">
    <property type="entry name" value="DNA-binding domain"/>
    <property type="match status" value="1"/>
</dbReference>
<dbReference type="PROSITE" id="PS51032">
    <property type="entry name" value="AP2_ERF"/>
    <property type="match status" value="1"/>
</dbReference>
<feature type="chain" id="PRO_0000112552" description="Ethylene-responsive transcription factor 3">
    <location>
        <begin position="1"/>
        <end position="225"/>
    </location>
</feature>
<feature type="DNA-binding region" description="AP2/ERF" evidence="1">
    <location>
        <begin position="27"/>
        <end position="84"/>
    </location>
</feature>
<feature type="region of interest" description="Disordered" evidence="2">
    <location>
        <begin position="127"/>
        <end position="197"/>
    </location>
</feature>
<feature type="short sequence motif" description="EAR-like (transcriptional repression)">
    <location>
        <begin position="199"/>
        <end position="205"/>
    </location>
</feature>
<feature type="compositionally biased region" description="Low complexity" evidence="2">
    <location>
        <begin position="132"/>
        <end position="143"/>
    </location>
</feature>
<feature type="splice variant" id="VSP_023535" description="In isoform 2." evidence="8">
    <original>RRGRGSSAVAGPTVVAAINGSV</original>
    <variation>EKSSCLVRYFRFRRRSCSRLRL</variation>
    <location>
        <begin position="2"/>
        <end position="23"/>
    </location>
</feature>
<feature type="splice variant" id="VSP_023536" description="In isoform 2." evidence="8">
    <location>
        <begin position="24"/>
        <end position="113"/>
    </location>
</feature>
<accession>O80339</accession>
<accession>Q0WS49</accession>
<accession>Q1LYT1</accession>
<evidence type="ECO:0000255" key="1">
    <source>
        <dbReference type="PROSITE-ProRule" id="PRU00366"/>
    </source>
</evidence>
<evidence type="ECO:0000256" key="2">
    <source>
        <dbReference type="SAM" id="MobiDB-lite"/>
    </source>
</evidence>
<evidence type="ECO:0000269" key="3">
    <source>
    </source>
</evidence>
<evidence type="ECO:0000269" key="4">
    <source>
    </source>
</evidence>
<evidence type="ECO:0000269" key="5">
    <source>
    </source>
</evidence>
<evidence type="ECO:0000269" key="6">
    <source>
    </source>
</evidence>
<evidence type="ECO:0000269" key="7">
    <source>
    </source>
</evidence>
<evidence type="ECO:0000303" key="8">
    <source ref="5"/>
</evidence>
<evidence type="ECO:0000305" key="9"/>
<name>ERF82_ARATH</name>
<proteinExistence type="evidence at protein level"/>
<keyword id="KW-0025">Alternative splicing</keyword>
<keyword id="KW-0238">DNA-binding</keyword>
<keyword id="KW-0936">Ethylene signaling pathway</keyword>
<keyword id="KW-0539">Nucleus</keyword>
<keyword id="KW-0611">Plant defense</keyword>
<keyword id="KW-1185">Reference proteome</keyword>
<keyword id="KW-0678">Repressor</keyword>
<keyword id="KW-0804">Transcription</keyword>
<keyword id="KW-0805">Transcription regulation</keyword>
<reference key="1">
    <citation type="journal article" date="2000" name="Plant Cell">
        <title>Arabidopsis ethylene responsive element binding factors act as transcriptional activators or repressors of GCC box mediated gene expression.</title>
        <authorList>
            <person name="Fujimoto S.Y."/>
            <person name="Ohta M."/>
            <person name="Usui A."/>
            <person name="Shinshi H."/>
            <person name="Ohme-Takagi M."/>
        </authorList>
    </citation>
    <scope>NUCLEOTIDE SEQUENCE [MRNA] (ISOFORM 1)</scope>
    <scope>FUNCTION</scope>
    <scope>INDUCTION</scope>
</reference>
<reference key="2">
    <citation type="journal article" date="2000" name="Nature">
        <title>Sequence and analysis of chromosome 1 of the plant Arabidopsis thaliana.</title>
        <authorList>
            <person name="Theologis A."/>
            <person name="Ecker J.R."/>
            <person name="Palm C.J."/>
            <person name="Federspiel N.A."/>
            <person name="Kaul S."/>
            <person name="White O."/>
            <person name="Alonso J."/>
            <person name="Altafi H."/>
            <person name="Araujo R."/>
            <person name="Bowman C.L."/>
            <person name="Brooks S.Y."/>
            <person name="Buehler E."/>
            <person name="Chan A."/>
            <person name="Chao Q."/>
            <person name="Chen H."/>
            <person name="Cheuk R.F."/>
            <person name="Chin C.W."/>
            <person name="Chung M.K."/>
            <person name="Conn L."/>
            <person name="Conway A.B."/>
            <person name="Conway A.R."/>
            <person name="Creasy T.H."/>
            <person name="Dewar K."/>
            <person name="Dunn P."/>
            <person name="Etgu P."/>
            <person name="Feldblyum T.V."/>
            <person name="Feng J.-D."/>
            <person name="Fong B."/>
            <person name="Fujii C.Y."/>
            <person name="Gill J.E."/>
            <person name="Goldsmith A.D."/>
            <person name="Haas B."/>
            <person name="Hansen N.F."/>
            <person name="Hughes B."/>
            <person name="Huizar L."/>
            <person name="Hunter J.L."/>
            <person name="Jenkins J."/>
            <person name="Johnson-Hopson C."/>
            <person name="Khan S."/>
            <person name="Khaykin E."/>
            <person name="Kim C.J."/>
            <person name="Koo H.L."/>
            <person name="Kremenetskaia I."/>
            <person name="Kurtz D.B."/>
            <person name="Kwan A."/>
            <person name="Lam B."/>
            <person name="Langin-Hooper S."/>
            <person name="Lee A."/>
            <person name="Lee J.M."/>
            <person name="Lenz C.A."/>
            <person name="Li J.H."/>
            <person name="Li Y.-P."/>
            <person name="Lin X."/>
            <person name="Liu S.X."/>
            <person name="Liu Z.A."/>
            <person name="Luros J.S."/>
            <person name="Maiti R."/>
            <person name="Marziali A."/>
            <person name="Militscher J."/>
            <person name="Miranda M."/>
            <person name="Nguyen M."/>
            <person name="Nierman W.C."/>
            <person name="Osborne B.I."/>
            <person name="Pai G."/>
            <person name="Peterson J."/>
            <person name="Pham P.K."/>
            <person name="Rizzo M."/>
            <person name="Rooney T."/>
            <person name="Rowley D."/>
            <person name="Sakano H."/>
            <person name="Salzberg S.L."/>
            <person name="Schwartz J.R."/>
            <person name="Shinn P."/>
            <person name="Southwick A.M."/>
            <person name="Sun H."/>
            <person name="Tallon L.J."/>
            <person name="Tambunga G."/>
            <person name="Toriumi M.J."/>
            <person name="Town C.D."/>
            <person name="Utterback T."/>
            <person name="Van Aken S."/>
            <person name="Vaysberg M."/>
            <person name="Vysotskaia V.S."/>
            <person name="Walker M."/>
            <person name="Wu D."/>
            <person name="Yu G."/>
            <person name="Fraser C.M."/>
            <person name="Venter J.C."/>
            <person name="Davis R.W."/>
        </authorList>
    </citation>
    <scope>NUCLEOTIDE SEQUENCE [LARGE SCALE GENOMIC DNA]</scope>
    <source>
        <strain>cv. Columbia</strain>
    </source>
</reference>
<reference key="3">
    <citation type="journal article" date="2017" name="Plant J.">
        <title>Araport11: a complete reannotation of the Arabidopsis thaliana reference genome.</title>
        <authorList>
            <person name="Cheng C.Y."/>
            <person name="Krishnakumar V."/>
            <person name="Chan A.P."/>
            <person name="Thibaud-Nissen F."/>
            <person name="Schobel S."/>
            <person name="Town C.D."/>
        </authorList>
    </citation>
    <scope>GENOME REANNOTATION</scope>
    <source>
        <strain>cv. Columbia</strain>
    </source>
</reference>
<reference key="4">
    <citation type="submission" date="2006-04" db="EMBL/GenBank/DDBJ databases">
        <title>Arabidopsis ORF clones.</title>
        <authorList>
            <person name="Shinn P."/>
            <person name="Chen H."/>
            <person name="Kim C.J."/>
            <person name="Ecker J.R."/>
        </authorList>
    </citation>
    <scope>NUCLEOTIDE SEQUENCE [LARGE SCALE MRNA] (ISOFORM 1)</scope>
    <source>
        <strain>cv. Columbia</strain>
    </source>
</reference>
<reference key="5">
    <citation type="submission" date="2006-07" db="EMBL/GenBank/DDBJ databases">
        <title>Large-scale analysis of RIKEN Arabidopsis full-length (RAFL) cDNAs.</title>
        <authorList>
            <person name="Totoki Y."/>
            <person name="Seki M."/>
            <person name="Ishida J."/>
            <person name="Nakajima M."/>
            <person name="Enju A."/>
            <person name="Kamiya A."/>
            <person name="Narusaka M."/>
            <person name="Shin-i T."/>
            <person name="Nakagawa M."/>
            <person name="Sakamoto N."/>
            <person name="Oishi K."/>
            <person name="Kohara Y."/>
            <person name="Kobayashi M."/>
            <person name="Toyoda A."/>
            <person name="Sakaki Y."/>
            <person name="Sakurai T."/>
            <person name="Iida K."/>
            <person name="Akiyama K."/>
            <person name="Satou M."/>
            <person name="Toyoda T."/>
            <person name="Konagaya A."/>
            <person name="Carninci P."/>
            <person name="Kawai J."/>
            <person name="Hayashizaki Y."/>
            <person name="Shinozaki K."/>
        </authorList>
    </citation>
    <scope>NUCLEOTIDE SEQUENCE [LARGE SCALE MRNA] (ISOFORM 2)</scope>
    <source>
        <strain>cv. Columbia</strain>
    </source>
</reference>
<reference key="6">
    <citation type="journal article" date="1998" name="J. Biol. Chem.">
        <title>Unique mode of GCC box recognition by the DNA-binding domain of ethylene-responsive element-binding factor (ERF domain) in plant.</title>
        <authorList>
            <person name="Hao D."/>
            <person name="Ohme-Takagi M."/>
            <person name="Sarai A."/>
        </authorList>
    </citation>
    <scope>FUNCTION</scope>
</reference>
<reference key="7">
    <citation type="journal article" date="2001" name="Plant Cell">
        <title>Repression domains of class II ERF transcriptional repressors share an essential motif for active repression.</title>
        <authorList>
            <person name="Ohta M."/>
            <person name="Matsui K."/>
            <person name="Hiratsu K."/>
            <person name="Shinshi H."/>
            <person name="Ohme-Takagi M."/>
        </authorList>
    </citation>
    <scope>FUNCTION</scope>
    <scope>DOMAIN</scope>
</reference>
<reference key="8">
    <citation type="journal article" date="2003" name="Plant Physiol.">
        <title>A role for the GCC-box in jasmonate-mediated activation of the PDF1.2 gene of Arabidopsis.</title>
        <authorList>
            <person name="Brown R.L."/>
            <person name="Kazan K."/>
            <person name="McGrath K.C."/>
            <person name="Maclean D.J."/>
            <person name="Manners J.M."/>
        </authorList>
    </citation>
    <scope>INDUCTION</scope>
</reference>
<reference key="9">
    <citation type="journal article" date="2006" name="Plant Mol. Biol.">
        <title>AtSAP18, an orthologue of human SAP18, is involved in the regulation of salt stress and mediates transcriptional repression in Arabidopsis.</title>
        <authorList>
            <person name="Song C.-P."/>
            <person name="Galbraith D.W."/>
        </authorList>
    </citation>
    <scope>INTERACTION WITH SAP18</scope>
</reference>
<reference key="10">
    <citation type="journal article" date="2006" name="Plant Physiol.">
        <title>Genome-wide analysis of the ERF gene family in Arabidopsis and rice.</title>
        <authorList>
            <person name="Nakano T."/>
            <person name="Suzuki K."/>
            <person name="Fujimura T."/>
            <person name="Shinshi H."/>
        </authorList>
    </citation>
    <scope>GENE FAMILY</scope>
    <scope>NOMENCLATURE</scope>
</reference>
<gene>
    <name type="primary">ERF3</name>
    <name type="synonym">ERF-3</name>
    <name type="synonym">ERF082</name>
    <name type="ordered locus">At1g50640</name>
    <name type="ORF">F11F12.4</name>
    <name type="ORF">F17J6.16</name>
</gene>
<organism>
    <name type="scientific">Arabidopsis thaliana</name>
    <name type="common">Mouse-ear cress</name>
    <dbReference type="NCBI Taxonomy" id="3702"/>
    <lineage>
        <taxon>Eukaryota</taxon>
        <taxon>Viridiplantae</taxon>
        <taxon>Streptophyta</taxon>
        <taxon>Embryophyta</taxon>
        <taxon>Tracheophyta</taxon>
        <taxon>Spermatophyta</taxon>
        <taxon>Magnoliopsida</taxon>
        <taxon>eudicotyledons</taxon>
        <taxon>Gunneridae</taxon>
        <taxon>Pentapetalae</taxon>
        <taxon>rosids</taxon>
        <taxon>malvids</taxon>
        <taxon>Brassicales</taxon>
        <taxon>Brassicaceae</taxon>
        <taxon>Camelineae</taxon>
        <taxon>Arabidopsis</taxon>
    </lineage>
</organism>
<comment type="function">
    <text evidence="3 4 7">Acts as a transcriptional repressor. Binds to the GCC-box pathogenesis-related promoter element. Involved in the regulation of gene expression by stress factors and by components of stress signal transduction pathways and could also regulate other AtERFs.</text>
</comment>
<comment type="subunit">
    <text evidence="6">Interacts with SAP18.</text>
</comment>
<comment type="interaction">
    <interactant intactId="EBI-965993">
        <id>O80339</id>
    </interactant>
    <interactant intactId="EBI-965964">
        <id>O64644</id>
        <label>At2g45640</label>
    </interactant>
    <organismsDiffer>false</organismsDiffer>
    <experiments>4</experiments>
</comment>
<comment type="subcellular location">
    <subcellularLocation>
        <location evidence="9">Nucleus</location>
    </subcellularLocation>
</comment>
<comment type="alternative products">
    <event type="alternative splicing"/>
    <isoform>
        <id>O80339-1</id>
        <name>1</name>
        <sequence type="displayed"/>
    </isoform>
    <isoform>
        <id>O80339-2</id>
        <name>2</name>
        <sequence type="described" ref="VSP_023535 VSP_023536"/>
    </isoform>
</comment>
<comment type="induction">
    <text evidence="3 5">Induced by jasmonate (JA), ethylene and Alternaria brassicicola (locally and systemically). Moderate induction by wounding or drought stress does not require EIN2, whereas induction by NaCl does. Transcripts accumulate slightly in cycloheximide-treated plants, a protein synthesis inhibitor. Seems to not be influenced by ethylene, exogenous abscisic acid (ABA), cold and heat stress.</text>
</comment>
<comment type="domain">
    <text evidence="4">Contains a slightly degenerated ERF-associated amphiphilic repression (EAR) motif, which may be involved in the activity of transcriptional repression.</text>
</comment>
<comment type="similarity">
    <text evidence="9">Belongs to the AP2/ERF transcription factor family. ERF subfamily.</text>
</comment>
<sequence>MRRGRGSSAVAGPTVVAAINGSVKEIRFRGVRKRPWGRFAAEIRDPWKKARVWLGTFDSAEEAARAYDSAARNLRGPKAKTNFPIDSSSPPPPNLRFNQIRNQNQNQVDPFMDHRLFTDHQQQFPIVNRPTSSSMSSTVESFSGPRPTTMKPATTKRYPRTPPVVPEDCHSDCDSSSSVIDDDDDIASSSRRRNPPFQFDLNFPPLDCVDLFNGADDLHCTDLRL</sequence>
<protein>
    <recommendedName>
        <fullName>Ethylene-responsive transcription factor 3</fullName>
        <shortName>AtERF3</shortName>
    </recommendedName>
    <alternativeName>
        <fullName>Ethylene-responsive element-binding factor 3</fullName>
        <shortName>EREBP-3</shortName>
    </alternativeName>
</protein>